<feature type="chain" id="PRO_0000119664" description="Glutamate--tRNA ligase">
    <location>
        <begin position="1"/>
        <end position="485"/>
    </location>
</feature>
<feature type="short sequence motif" description="'HIGH' region" evidence="1">
    <location>
        <begin position="11"/>
        <end position="21"/>
    </location>
</feature>
<feature type="short sequence motif" description="'KMSKS' region" evidence="1">
    <location>
        <begin position="255"/>
        <end position="259"/>
    </location>
</feature>
<feature type="binding site" evidence="1">
    <location>
        <position position="258"/>
    </location>
    <ligand>
        <name>ATP</name>
        <dbReference type="ChEBI" id="CHEBI:30616"/>
    </ligand>
</feature>
<accession>Q8DVX9</accession>
<proteinExistence type="inferred from homology"/>
<keyword id="KW-0030">Aminoacyl-tRNA synthetase</keyword>
<keyword id="KW-0067">ATP-binding</keyword>
<keyword id="KW-0963">Cytoplasm</keyword>
<keyword id="KW-0436">Ligase</keyword>
<keyword id="KW-0547">Nucleotide-binding</keyword>
<keyword id="KW-0648">Protein biosynthesis</keyword>
<keyword id="KW-1185">Reference proteome</keyword>
<comment type="function">
    <text evidence="1">Catalyzes the attachment of glutamate to tRNA(Glu) in a two-step reaction: glutamate is first activated by ATP to form Glu-AMP and then transferred to the acceptor end of tRNA(Glu).</text>
</comment>
<comment type="catalytic activity">
    <reaction evidence="1">
        <text>tRNA(Glu) + L-glutamate + ATP = L-glutamyl-tRNA(Glu) + AMP + diphosphate</text>
        <dbReference type="Rhea" id="RHEA:23540"/>
        <dbReference type="Rhea" id="RHEA-COMP:9663"/>
        <dbReference type="Rhea" id="RHEA-COMP:9680"/>
        <dbReference type="ChEBI" id="CHEBI:29985"/>
        <dbReference type="ChEBI" id="CHEBI:30616"/>
        <dbReference type="ChEBI" id="CHEBI:33019"/>
        <dbReference type="ChEBI" id="CHEBI:78442"/>
        <dbReference type="ChEBI" id="CHEBI:78520"/>
        <dbReference type="ChEBI" id="CHEBI:456215"/>
        <dbReference type="EC" id="6.1.1.17"/>
    </reaction>
</comment>
<comment type="subunit">
    <text evidence="1">Monomer.</text>
</comment>
<comment type="subcellular location">
    <subcellularLocation>
        <location evidence="1">Cytoplasm</location>
    </subcellularLocation>
</comment>
<comment type="similarity">
    <text evidence="1">Belongs to the class-I aminoacyl-tRNA synthetase family. Glutamate--tRNA ligase type 1 subfamily.</text>
</comment>
<reference key="1">
    <citation type="journal article" date="2002" name="Proc. Natl. Acad. Sci. U.S.A.">
        <title>Genome sequence of Streptococcus mutans UA159, a cariogenic dental pathogen.</title>
        <authorList>
            <person name="Ajdic D.J."/>
            <person name="McShan W.M."/>
            <person name="McLaughlin R.E."/>
            <person name="Savic G."/>
            <person name="Chang J."/>
            <person name="Carson M.B."/>
            <person name="Primeaux C."/>
            <person name="Tian R."/>
            <person name="Kenton S."/>
            <person name="Jia H.G."/>
            <person name="Lin S.P."/>
            <person name="Qian Y."/>
            <person name="Li S."/>
            <person name="Zhu H."/>
            <person name="Najar F.Z."/>
            <person name="Lai H."/>
            <person name="White J."/>
            <person name="Roe B.A."/>
            <person name="Ferretti J.J."/>
        </authorList>
    </citation>
    <scope>NUCLEOTIDE SEQUENCE [LARGE SCALE GENOMIC DNA]</scope>
    <source>
        <strain>ATCC 700610 / UA159</strain>
    </source>
</reference>
<evidence type="ECO:0000255" key="1">
    <source>
        <dbReference type="HAMAP-Rule" id="MF_00022"/>
    </source>
</evidence>
<organism>
    <name type="scientific">Streptococcus mutans serotype c (strain ATCC 700610 / UA159)</name>
    <dbReference type="NCBI Taxonomy" id="210007"/>
    <lineage>
        <taxon>Bacteria</taxon>
        <taxon>Bacillati</taxon>
        <taxon>Bacillota</taxon>
        <taxon>Bacilli</taxon>
        <taxon>Lactobacillales</taxon>
        <taxon>Streptococcaceae</taxon>
        <taxon>Streptococcus</taxon>
    </lineage>
</organism>
<gene>
    <name evidence="1" type="primary">gltX</name>
    <name type="ordered locus">SMU_330</name>
</gene>
<protein>
    <recommendedName>
        <fullName evidence="1">Glutamate--tRNA ligase</fullName>
        <ecNumber evidence="1">6.1.1.17</ecNumber>
    </recommendedName>
    <alternativeName>
        <fullName evidence="1">Glutamyl-tRNA synthetase</fullName>
        <shortName evidence="1">GluRS</shortName>
    </alternativeName>
</protein>
<dbReference type="EC" id="6.1.1.17" evidence="1"/>
<dbReference type="EMBL" id="AE014133">
    <property type="protein sequence ID" value="AAN58089.1"/>
    <property type="molecule type" value="Genomic_DNA"/>
</dbReference>
<dbReference type="RefSeq" id="NP_720783.1">
    <property type="nucleotide sequence ID" value="NC_004350.2"/>
</dbReference>
<dbReference type="RefSeq" id="WP_002262517.1">
    <property type="nucleotide sequence ID" value="NC_004350.2"/>
</dbReference>
<dbReference type="SMR" id="Q8DVX9"/>
<dbReference type="STRING" id="210007.SMU_330"/>
<dbReference type="GeneID" id="93860091"/>
<dbReference type="KEGG" id="smu:SMU_330"/>
<dbReference type="PATRIC" id="fig|210007.7.peg.285"/>
<dbReference type="eggNOG" id="COG0008">
    <property type="taxonomic scope" value="Bacteria"/>
</dbReference>
<dbReference type="HOGENOM" id="CLU_015768_6_1_9"/>
<dbReference type="OrthoDB" id="9807503at2"/>
<dbReference type="PhylomeDB" id="Q8DVX9"/>
<dbReference type="Proteomes" id="UP000002512">
    <property type="component" value="Chromosome"/>
</dbReference>
<dbReference type="GO" id="GO:0005829">
    <property type="term" value="C:cytosol"/>
    <property type="evidence" value="ECO:0007669"/>
    <property type="project" value="TreeGrafter"/>
</dbReference>
<dbReference type="GO" id="GO:0005524">
    <property type="term" value="F:ATP binding"/>
    <property type="evidence" value="ECO:0007669"/>
    <property type="project" value="UniProtKB-UniRule"/>
</dbReference>
<dbReference type="GO" id="GO:0004818">
    <property type="term" value="F:glutamate-tRNA ligase activity"/>
    <property type="evidence" value="ECO:0007669"/>
    <property type="project" value="UniProtKB-UniRule"/>
</dbReference>
<dbReference type="GO" id="GO:0000049">
    <property type="term" value="F:tRNA binding"/>
    <property type="evidence" value="ECO:0007669"/>
    <property type="project" value="InterPro"/>
</dbReference>
<dbReference type="GO" id="GO:0008270">
    <property type="term" value="F:zinc ion binding"/>
    <property type="evidence" value="ECO:0007669"/>
    <property type="project" value="InterPro"/>
</dbReference>
<dbReference type="GO" id="GO:0006424">
    <property type="term" value="P:glutamyl-tRNA aminoacylation"/>
    <property type="evidence" value="ECO:0007669"/>
    <property type="project" value="UniProtKB-UniRule"/>
</dbReference>
<dbReference type="CDD" id="cd00808">
    <property type="entry name" value="GluRS_core"/>
    <property type="match status" value="1"/>
</dbReference>
<dbReference type="FunFam" id="1.10.10.350:FF:000002">
    <property type="entry name" value="Glutamate--tRNA ligase"/>
    <property type="match status" value="1"/>
</dbReference>
<dbReference type="FunFam" id="3.40.50.620:FF:000007">
    <property type="entry name" value="Glutamate--tRNA ligase"/>
    <property type="match status" value="1"/>
</dbReference>
<dbReference type="Gene3D" id="1.10.10.350">
    <property type="match status" value="1"/>
</dbReference>
<dbReference type="Gene3D" id="3.40.50.620">
    <property type="entry name" value="HUPs"/>
    <property type="match status" value="1"/>
</dbReference>
<dbReference type="HAMAP" id="MF_00022">
    <property type="entry name" value="Glu_tRNA_synth_type1"/>
    <property type="match status" value="1"/>
</dbReference>
<dbReference type="InterPro" id="IPR045462">
    <property type="entry name" value="aa-tRNA-synth_I_cd-bd"/>
</dbReference>
<dbReference type="InterPro" id="IPR020751">
    <property type="entry name" value="aa-tRNA-synth_I_codon-bd_sub2"/>
</dbReference>
<dbReference type="InterPro" id="IPR001412">
    <property type="entry name" value="aa-tRNA-synth_I_CS"/>
</dbReference>
<dbReference type="InterPro" id="IPR008925">
    <property type="entry name" value="aa_tRNA-synth_I_cd-bd_sf"/>
</dbReference>
<dbReference type="InterPro" id="IPR004527">
    <property type="entry name" value="Glu-tRNA-ligase_bac/mito"/>
</dbReference>
<dbReference type="InterPro" id="IPR000924">
    <property type="entry name" value="Glu/Gln-tRNA-synth"/>
</dbReference>
<dbReference type="InterPro" id="IPR020058">
    <property type="entry name" value="Glu/Gln-tRNA-synth_Ib_cat-dom"/>
</dbReference>
<dbReference type="InterPro" id="IPR049940">
    <property type="entry name" value="GluQ/Sye"/>
</dbReference>
<dbReference type="InterPro" id="IPR033910">
    <property type="entry name" value="GluRS_core"/>
</dbReference>
<dbReference type="InterPro" id="IPR014729">
    <property type="entry name" value="Rossmann-like_a/b/a_fold"/>
</dbReference>
<dbReference type="NCBIfam" id="TIGR00464">
    <property type="entry name" value="gltX_bact"/>
    <property type="match status" value="1"/>
</dbReference>
<dbReference type="PANTHER" id="PTHR43311">
    <property type="entry name" value="GLUTAMATE--TRNA LIGASE"/>
    <property type="match status" value="1"/>
</dbReference>
<dbReference type="PANTHER" id="PTHR43311:SF2">
    <property type="entry name" value="GLUTAMATE--TRNA LIGASE, MITOCHONDRIAL-RELATED"/>
    <property type="match status" value="1"/>
</dbReference>
<dbReference type="Pfam" id="PF19269">
    <property type="entry name" value="Anticodon_2"/>
    <property type="match status" value="1"/>
</dbReference>
<dbReference type="Pfam" id="PF00749">
    <property type="entry name" value="tRNA-synt_1c"/>
    <property type="match status" value="1"/>
</dbReference>
<dbReference type="PRINTS" id="PR00987">
    <property type="entry name" value="TRNASYNTHGLU"/>
</dbReference>
<dbReference type="SUPFAM" id="SSF48163">
    <property type="entry name" value="An anticodon-binding domain of class I aminoacyl-tRNA synthetases"/>
    <property type="match status" value="1"/>
</dbReference>
<dbReference type="SUPFAM" id="SSF52374">
    <property type="entry name" value="Nucleotidylyl transferase"/>
    <property type="match status" value="1"/>
</dbReference>
<dbReference type="PROSITE" id="PS00178">
    <property type="entry name" value="AA_TRNA_LIGASE_I"/>
    <property type="match status" value="1"/>
</dbReference>
<sequence>MTNKIRVRYAPSPTGLLHIGNARTALFNYLYARHHGGDFIIRIEDTDRKRHVEDGERSQLENLRWLGMDWDESPETHENYRQSERLALYKKYIDQLLAEGKAYKSYVTEEELAAERERQEAAGETPRYINEFLGMSADEKAAYIAKRQAAGIVPTVRLKVNEAGIYKWHDMVKGDIEFEGGNIGGDWVIQKKDGYPTYNFAVVVDDHDMQISHVIRGDDHIANTPKQLMVYEALGWEAPAFAHMTLIINSETGKKLSKRDTNTLQFIEDYRQKGYLPEAVFNFIALLGWNPGGENEIFSRQELIELFDENRLSKSPAAFDQKKLDWMNNEYIKNADFDTIFALAKPYLESAGRLTDKAKKLVELYQPQMKSIDEIVPLTDLFFEEFPELSEEEKEFMAGETVPIVLQAFKAKLEAMSDEDFKSENIFPQIKAVQKETGIKGKNLFMPIRIAVSGEMHGPELPDTIFLLGKEKSIQHLEDMLEKLK</sequence>
<name>SYE_STRMU</name>